<evidence type="ECO:0000250" key="1"/>
<evidence type="ECO:0000250" key="2">
    <source>
        <dbReference type="UniProtKB" id="Q12441"/>
    </source>
</evidence>
<evidence type="ECO:0000256" key="3">
    <source>
        <dbReference type="SAM" id="MobiDB-lite"/>
    </source>
</evidence>
<evidence type="ECO:0000269" key="4">
    <source>
    </source>
</evidence>
<name>YN12A_YEAST</name>
<dbReference type="EMBL" id="Z71330">
    <property type="protein sequence ID" value="CAA95923.1"/>
    <property type="molecule type" value="Genomic_DNA"/>
</dbReference>
<dbReference type="EMBL" id="Z71331">
    <property type="protein sequence ID" value="CAA95927.1"/>
    <property type="molecule type" value="Genomic_DNA"/>
</dbReference>
<dbReference type="EMBL" id="X05058">
    <property type="protein sequence ID" value="CAA28728.1"/>
    <property type="molecule type" value="Genomic_DNA"/>
</dbReference>
<dbReference type="EMBL" id="BK006947">
    <property type="protein sequence ID" value="DAA10490.1"/>
    <property type="molecule type" value="Genomic_DNA"/>
</dbReference>
<dbReference type="PIR" id="S41856">
    <property type="entry name" value="S41856"/>
</dbReference>
<dbReference type="PIR" id="S69971">
    <property type="entry name" value="S69971"/>
</dbReference>
<dbReference type="RefSeq" id="NP_058180.1">
    <molecule id="Q12470-1"/>
    <property type="nucleotide sequence ID" value="NM_001184413.3"/>
</dbReference>
<dbReference type="SMR" id="Q12470"/>
<dbReference type="BioGRID" id="35768">
    <property type="interactions" value="14"/>
</dbReference>
<dbReference type="FunCoup" id="Q12470">
    <property type="interactions" value="67"/>
</dbReference>
<dbReference type="IntAct" id="Q12470">
    <property type="interactions" value="1"/>
</dbReference>
<dbReference type="MINT" id="Q12470"/>
<dbReference type="GlyGen" id="Q12470">
    <property type="glycosylation" value="2 sites"/>
</dbReference>
<dbReference type="PaxDb" id="4932-YNL054W-A"/>
<dbReference type="PeptideAtlas" id="Q12470"/>
<dbReference type="GeneID" id="855671"/>
<dbReference type="KEGG" id="sce:YNL054W-A"/>
<dbReference type="AGR" id="SGD:S000007384"/>
<dbReference type="SGD" id="S000007384">
    <property type="gene designation" value="YNL054W-A"/>
</dbReference>
<dbReference type="VEuPathDB" id="FungiDB:YNL054W-A"/>
<dbReference type="eggNOG" id="KOG0017">
    <property type="taxonomic scope" value="Eukaryota"/>
</dbReference>
<dbReference type="HOGENOM" id="CLU_045291_1_0_1"/>
<dbReference type="InParanoid" id="Q12470"/>
<dbReference type="OrthoDB" id="5423336at2759"/>
<dbReference type="Proteomes" id="UP000002311">
    <property type="component" value="Chromosome XIV"/>
</dbReference>
<dbReference type="RNAct" id="Q12470">
    <property type="molecule type" value="protein"/>
</dbReference>
<dbReference type="GO" id="GO:0005737">
    <property type="term" value="C:cytoplasm"/>
    <property type="evidence" value="ECO:0007669"/>
    <property type="project" value="UniProtKB-SubCell"/>
</dbReference>
<dbReference type="GO" id="GO:0003723">
    <property type="term" value="F:RNA binding"/>
    <property type="evidence" value="ECO:0007669"/>
    <property type="project" value="UniProtKB-KW"/>
</dbReference>
<dbReference type="GO" id="GO:0075523">
    <property type="term" value="P:viral translational frameshifting"/>
    <property type="evidence" value="ECO:0007669"/>
    <property type="project" value="UniProtKB-KW"/>
</dbReference>
<dbReference type="InterPro" id="IPR015820">
    <property type="entry name" value="TYA"/>
</dbReference>
<dbReference type="Pfam" id="PF01021">
    <property type="entry name" value="TYA"/>
    <property type="match status" value="1"/>
</dbReference>
<protein>
    <recommendedName>
        <fullName>Transposon Ty1-NL2 Gag polyprotein</fullName>
    </recommendedName>
    <alternativeName>
        <fullName>Gag-p49</fullName>
    </alternativeName>
    <alternativeName>
        <fullName>Transposon Ty1 protein A</fullName>
        <shortName>TY1A</shortName>
        <shortName>TYA</shortName>
    </alternativeName>
    <alternativeName>
        <fullName>p58</fullName>
    </alternativeName>
    <component>
        <recommendedName>
            <fullName>Capsid protein</fullName>
            <shortName>CA</shortName>
        </recommendedName>
        <alternativeName>
            <fullName>Gag-p45</fullName>
        </alternativeName>
        <alternativeName>
            <fullName>p54</fullName>
        </alternativeName>
    </component>
    <component>
        <recommendedName>
            <fullName>Gag-p4</fullName>
        </recommendedName>
    </component>
</protein>
<comment type="function">
    <text evidence="1">Capsid protein (CA) is the structural component of the virus-like particle (VLP), forming the shell that encapsulates the retrotransposons dimeric RNA genome. The particles are assembled from trimer-clustered units and there are holes in the capsid shells that allow for the diffusion of macromolecules. CA also has nucleocapsid-like chaperone activity, promoting primer tRNA(i)-Met annealing to the multipartite primer-binding site (PBS), dimerization of Ty1 RNA and initiation of reverse transcription (By similarity).</text>
</comment>
<comment type="subunit">
    <text evidence="1">Homotrimer.</text>
</comment>
<comment type="subcellular location">
    <subcellularLocation>
        <location evidence="1">Cytoplasm</location>
    </subcellularLocation>
</comment>
<comment type="alternative products">
    <event type="ribosomal frameshifting"/>
    <isoform>
        <id>Q12470-1</id>
        <name>Transposon Ty1-NL2 Gag polyprotein</name>
        <sequence type="displayed"/>
    </isoform>
    <isoform>
        <id>Q99337-1</id>
        <name>Transposon Ty1-NL2 Gag-Pol polyprotein</name>
        <sequence type="external"/>
    </isoform>
    <text evidence="1">The Gag-Pol polyprotein is generated by a +1 ribosomal frameshift. The ratio of Gag:Gag-Pol varies between 20:1 and 5:1 (By similarity).</text>
</comment>
<comment type="induction">
    <text evidence="4">Ty1-NL2 is a weakly expressed element. Induced under amino acid starvation conditions by GCN4.</text>
</comment>
<comment type="domain">
    <text evidence="1">The C-terminal RNA-binding region of CA is sufficient for all its nucleocapsid-like chaperone activities.</text>
</comment>
<comment type="miscellaneous">
    <text>Retrotransposons are mobile genetic entities that are able to replicate via an RNA intermediate and a reverse transcription step. In contrast to retroviruses, retrotransposons are non-infectious, lack an envelope and remain intracellular. Ty1 retrotransposons belong to the copia elements (pseudoviridae).</text>
</comment>
<comment type="miscellaneous">
    <molecule>Isoform Transposon Ty1-NL2 Gag polyprotein</molecule>
    <text>Produced by conventional translation.</text>
</comment>
<proteinExistence type="evidence at transcript level"/>
<reference key="1">
    <citation type="journal article" date="1997" name="Nature">
        <title>The nucleotide sequence of Saccharomyces cerevisiae chromosome XIV and its evolutionary implications.</title>
        <authorList>
            <person name="Philippsen P."/>
            <person name="Kleine K."/>
            <person name="Poehlmann R."/>
            <person name="Duesterhoeft A."/>
            <person name="Hamberg K."/>
            <person name="Hegemann J.H."/>
            <person name="Obermaier B."/>
            <person name="Urrestarazu L.A."/>
            <person name="Aert R."/>
            <person name="Albermann K."/>
            <person name="Altmann R."/>
            <person name="Andre B."/>
            <person name="Baladron V."/>
            <person name="Ballesta J.P.G."/>
            <person name="Becam A.-M."/>
            <person name="Beinhauer J.D."/>
            <person name="Boskovic J."/>
            <person name="Buitrago M.J."/>
            <person name="Bussereau F."/>
            <person name="Coster F."/>
            <person name="Crouzet M."/>
            <person name="D'Angelo M."/>
            <person name="Dal Pero F."/>
            <person name="De Antoni A."/>
            <person name="del Rey F."/>
            <person name="Doignon F."/>
            <person name="Domdey H."/>
            <person name="Dubois E."/>
            <person name="Fiedler T.A."/>
            <person name="Fleig U."/>
            <person name="Floeth M."/>
            <person name="Fritz C."/>
            <person name="Gaillardin C."/>
            <person name="Garcia-Cantalejo J.M."/>
            <person name="Glansdorff N."/>
            <person name="Goffeau A."/>
            <person name="Gueldener U."/>
            <person name="Herbert C.J."/>
            <person name="Heumann K."/>
            <person name="Heuss-Neitzel D."/>
            <person name="Hilbert H."/>
            <person name="Hinni K."/>
            <person name="Iraqui Houssaini I."/>
            <person name="Jacquet M."/>
            <person name="Jimenez A."/>
            <person name="Jonniaux J.-L."/>
            <person name="Karpfinger-Hartl L."/>
            <person name="Lanfranchi G."/>
            <person name="Lepingle A."/>
            <person name="Levesque H."/>
            <person name="Lyck R."/>
            <person name="Maftahi M."/>
            <person name="Mallet L."/>
            <person name="Maurer C.T.C."/>
            <person name="Messenguy F."/>
            <person name="Mewes H.-W."/>
            <person name="Moestl D."/>
            <person name="Nasr F."/>
            <person name="Nicaud J.-M."/>
            <person name="Niedenthal R.K."/>
            <person name="Pandolfo D."/>
            <person name="Pierard A."/>
            <person name="Piravandi E."/>
            <person name="Planta R.J."/>
            <person name="Pohl T.M."/>
            <person name="Purnelle B."/>
            <person name="Rebischung C."/>
            <person name="Remacha M.A."/>
            <person name="Revuelta J.L."/>
            <person name="Rinke M."/>
            <person name="Saiz J.E."/>
            <person name="Sartorello F."/>
            <person name="Scherens B."/>
            <person name="Sen-Gupta M."/>
            <person name="Soler-Mira A."/>
            <person name="Urbanus J.H.M."/>
            <person name="Valle G."/>
            <person name="Van Dyck L."/>
            <person name="Verhasselt P."/>
            <person name="Vierendeels F."/>
            <person name="Vissers S."/>
            <person name="Voet M."/>
            <person name="Volckaert G."/>
            <person name="Wach A."/>
            <person name="Wambutt R."/>
            <person name="Wedler H."/>
            <person name="Zollner A."/>
            <person name="Hani J."/>
        </authorList>
    </citation>
    <scope>NUCLEOTIDE SEQUENCE [LARGE SCALE GENOMIC DNA]</scope>
    <source>
        <strain>ATCC 204508 / S288c</strain>
    </source>
</reference>
<reference key="2">
    <citation type="journal article" date="2014" name="G3 (Bethesda)">
        <title>The reference genome sequence of Saccharomyces cerevisiae: Then and now.</title>
        <authorList>
            <person name="Engel S.R."/>
            <person name="Dietrich F.S."/>
            <person name="Fisk D.G."/>
            <person name="Binkley G."/>
            <person name="Balakrishnan R."/>
            <person name="Costanzo M.C."/>
            <person name="Dwight S.S."/>
            <person name="Hitz B.C."/>
            <person name="Karra K."/>
            <person name="Nash R.S."/>
            <person name="Weng S."/>
            <person name="Wong E.D."/>
            <person name="Lloyd P."/>
            <person name="Skrzypek M.S."/>
            <person name="Miyasato S.R."/>
            <person name="Simison M."/>
            <person name="Cherry J.M."/>
        </authorList>
    </citation>
    <scope>GENOME REANNOTATION</scope>
    <source>
        <strain>ATCC 204508 / S288c</strain>
    </source>
</reference>
<reference key="3">
    <citation type="journal article" date="1987" name="Nucleic Acids Res.">
        <title>Structure of the Saccharomyces cerevisiae gene encoding tRNA-Ile (IAU).</title>
        <authorList>
            <person name="Felici F."/>
            <person name="Cesareni G."/>
        </authorList>
    </citation>
    <scope>NUCLEOTIDE SEQUENCE [GENOMIC DNA] OF 1-105</scope>
    <source>
        <strain>D273-10B/A21</strain>
    </source>
</reference>
<reference key="4">
    <citation type="journal article" date="1998" name="Genome Res.">
        <title>Transposable elements and genome organization: a comprehensive survey of retrotransposons revealed by the complete Saccharomyces cerevisiae genome sequence.</title>
        <authorList>
            <person name="Kim J.M."/>
            <person name="Vanguri S."/>
            <person name="Boeke J.D."/>
            <person name="Gabriel A."/>
            <person name="Voytas D.F."/>
        </authorList>
    </citation>
    <scope>NOMENCLATURE</scope>
</reference>
<reference key="5">
    <citation type="journal article" date="2002" name="Mol. Cell. Biol.">
        <title>Differential effects of chromatin and Gcn4 on the 50-fold range of expression among individual yeast Ty1 retrotransposons.</title>
        <authorList>
            <person name="Morillon A."/>
            <person name="Benard L."/>
            <person name="Springer M."/>
            <person name="Lesage P."/>
        </authorList>
    </citation>
    <scope>INDUCTION</scope>
</reference>
<reference key="6">
    <citation type="journal article" date="2005" name="Cytogenet. Genome Res.">
        <title>Happy together: the life and times of Ty retrotransposons and their hosts.</title>
        <authorList>
            <person name="Lesage P."/>
            <person name="Todeschini A.L."/>
        </authorList>
    </citation>
    <scope>REVIEW</scope>
</reference>
<accession>Q12470</accession>
<accession>D6W1C4</accession>
<accession>Q07115</accession>
<keyword id="KW-0963">Cytoplasm</keyword>
<keyword id="KW-0597">Phosphoprotein</keyword>
<keyword id="KW-1185">Reference proteome</keyword>
<keyword id="KW-0688">Ribosomal frameshifting</keyword>
<keyword id="KW-0694">RNA-binding</keyword>
<keyword id="KW-0814">Transposable element</keyword>
<sequence>MESQQLSQHSPISHGSACASVTSKEVHTNQDPLDVSASKIQEYDKASTKANSQQTTTPASSAVPENPHHASPQTAQSHSPQNGPYPQQCMMTQNQANPSDWSFYGRPSMIPYTPYQMSPMYFPPGPHSQFPQYPSSVGTPLSTPSPESGNTFTDSSSADSDMTSTKKYVRPPPMLTSPNDFLNWVKTYIKFLQNSNLGGIIPTVNGKPVRQITDDELTFLYNTFQIFAPSQFLPTWVKDILSVDYTDIMKILSKSIEKMQSDTQEANDIVTLANLQYNGSTPADAFETKVTNIIDRLNNNGIHINNKVACQLIMRGLSGEYKFLRYTRHRHLNMTVAELFLDIHAIYEEQQGSRNSKPNYRRNPSDEKNDSRSYTNTTKPKVIARNPQKTNNSKSKTARAHNVSTSNNSPSTDNDSISKSTTEPIQLNNKHDLHLRPETY</sequence>
<feature type="chain" id="PRO_0000279150" description="Transposon Ty1-NL2 Gag polyprotein">
    <location>
        <begin position="1"/>
        <end position="440"/>
    </location>
</feature>
<feature type="chain" id="PRO_0000279151" description="Capsid protein" evidence="1">
    <location>
        <begin position="1"/>
        <end position="401"/>
    </location>
</feature>
<feature type="peptide" id="PRO_0000279152" description="Gag-p4" evidence="1">
    <location>
        <begin position="402"/>
        <end position="440"/>
    </location>
</feature>
<feature type="region of interest" description="Disordered" evidence="3">
    <location>
        <begin position="1"/>
        <end position="97"/>
    </location>
</feature>
<feature type="region of interest" description="Disordered" evidence="3">
    <location>
        <begin position="129"/>
        <end position="171"/>
    </location>
</feature>
<feature type="region of interest" description="RNA-binding" evidence="1">
    <location>
        <begin position="299"/>
        <end position="401"/>
    </location>
</feature>
<feature type="region of interest" description="Disordered" evidence="3">
    <location>
        <begin position="352"/>
        <end position="440"/>
    </location>
</feature>
<feature type="compositionally biased region" description="Polar residues" evidence="3">
    <location>
        <begin position="1"/>
        <end position="23"/>
    </location>
</feature>
<feature type="compositionally biased region" description="Polar residues" evidence="3">
    <location>
        <begin position="48"/>
        <end position="60"/>
    </location>
</feature>
<feature type="compositionally biased region" description="Polar residues" evidence="3">
    <location>
        <begin position="71"/>
        <end position="97"/>
    </location>
</feature>
<feature type="compositionally biased region" description="Polar residues" evidence="3">
    <location>
        <begin position="129"/>
        <end position="152"/>
    </location>
</feature>
<feature type="compositionally biased region" description="Low complexity" evidence="3">
    <location>
        <begin position="153"/>
        <end position="165"/>
    </location>
</feature>
<feature type="compositionally biased region" description="Low complexity" evidence="3">
    <location>
        <begin position="402"/>
        <end position="418"/>
    </location>
</feature>
<feature type="compositionally biased region" description="Polar residues" evidence="3">
    <location>
        <begin position="419"/>
        <end position="428"/>
    </location>
</feature>
<feature type="compositionally biased region" description="Basic and acidic residues" evidence="3">
    <location>
        <begin position="429"/>
        <end position="440"/>
    </location>
</feature>
<feature type="site" description="Cleavage; by Ty1 protease" evidence="1">
    <location>
        <begin position="401"/>
        <end position="402"/>
    </location>
</feature>
<feature type="modified residue" description="Phosphoserine" evidence="2">
    <location>
        <position position="416"/>
    </location>
</feature>
<organism>
    <name type="scientific">Saccharomyces cerevisiae (strain ATCC 204508 / S288c)</name>
    <name type="common">Baker's yeast</name>
    <dbReference type="NCBI Taxonomy" id="559292"/>
    <lineage>
        <taxon>Eukaryota</taxon>
        <taxon>Fungi</taxon>
        <taxon>Dikarya</taxon>
        <taxon>Ascomycota</taxon>
        <taxon>Saccharomycotina</taxon>
        <taxon>Saccharomycetes</taxon>
        <taxon>Saccharomycetales</taxon>
        <taxon>Saccharomycetaceae</taxon>
        <taxon>Saccharomyces</taxon>
    </lineage>
</organism>
<gene>
    <name type="primary">TY1A-NL2</name>
    <name type="synonym">YNLWTy1-2 GAG</name>
    <name type="ordered locus">YNL054W-A</name>
    <name type="ORF">N2447</name>
</gene>